<dbReference type="EMBL" id="AL732541">
    <property type="status" value="NOT_ANNOTATED_CDS"/>
    <property type="molecule type" value="Genomic_DNA"/>
</dbReference>
<dbReference type="EMBL" id="BC042603">
    <property type="protein sequence ID" value="AAH42603.1"/>
    <property type="molecule type" value="mRNA"/>
</dbReference>
<dbReference type="EMBL" id="AK122242">
    <property type="protein sequence ID" value="BAC65524.3"/>
    <property type="molecule type" value="mRNA"/>
</dbReference>
<dbReference type="CCDS" id="CCDS38085.1">
    <molecule id="E9QAT4-1"/>
</dbReference>
<dbReference type="RefSeq" id="NP_694765.2">
    <molecule id="E9QAT4-1"/>
    <property type="nucleotide sequence ID" value="NM_153125.2"/>
</dbReference>
<dbReference type="RefSeq" id="XP_006497974.1">
    <molecule id="E9QAT4-2"/>
    <property type="nucleotide sequence ID" value="XM_006497911.4"/>
</dbReference>
<dbReference type="FunCoup" id="E9QAT4">
    <property type="interactions" value="2601"/>
</dbReference>
<dbReference type="IntAct" id="E9QAT4">
    <property type="interactions" value="8"/>
</dbReference>
<dbReference type="MINT" id="E9QAT4"/>
<dbReference type="STRING" id="10090.ENSMUSP00000088796"/>
<dbReference type="GlyGen" id="E9QAT4">
    <property type="glycosylation" value="5 sites, 1 O-linked glycan (3 sites)"/>
</dbReference>
<dbReference type="iPTMnet" id="E9QAT4"/>
<dbReference type="PhosphoSitePlus" id="E9QAT4"/>
<dbReference type="SwissPalm" id="E9QAT4"/>
<dbReference type="jPOST" id="E9QAT4"/>
<dbReference type="PaxDb" id="10090-ENSMUSP00000109716"/>
<dbReference type="PeptideAtlas" id="E9QAT4"/>
<dbReference type="ProteomicsDB" id="311996"/>
<dbReference type="ProteomicsDB" id="361542">
    <molecule id="E9QAT4-1"/>
</dbReference>
<dbReference type="Pumba" id="E9QAT4"/>
<dbReference type="Antibodypedia" id="1693">
    <property type="antibodies" value="52 antibodies from 19 providers"/>
</dbReference>
<dbReference type="DNASU" id="227648"/>
<dbReference type="Ensembl" id="ENSMUST00000091252.5">
    <molecule id="E9QAT4-1"/>
    <property type="protein sequence ID" value="ENSMUSP00000088796.5"/>
    <property type="gene ID" value="ENSMUSG00000026924.18"/>
</dbReference>
<dbReference type="Ensembl" id="ENSMUST00000114082.9">
    <molecule id="E9QAT4-2"/>
    <property type="protein sequence ID" value="ENSMUSP00000109716.3"/>
    <property type="gene ID" value="ENSMUSG00000026924.18"/>
</dbReference>
<dbReference type="GeneID" id="227648"/>
<dbReference type="KEGG" id="mmu:227648"/>
<dbReference type="UCSC" id="uc008ivi.1">
    <molecule id="E9QAT4-1"/>
    <property type="organism name" value="mouse"/>
</dbReference>
<dbReference type="AGR" id="MGI:2139207"/>
<dbReference type="CTD" id="9919"/>
<dbReference type="MGI" id="MGI:2139207">
    <property type="gene designation" value="Sec16a"/>
</dbReference>
<dbReference type="VEuPathDB" id="HostDB:ENSMUSG00000026924"/>
<dbReference type="eggNOG" id="KOG1913">
    <property type="taxonomic scope" value="Eukaryota"/>
</dbReference>
<dbReference type="GeneTree" id="ENSGT00940000159324"/>
<dbReference type="HOGENOM" id="CLU_001465_0_0_1"/>
<dbReference type="InParanoid" id="E9QAT4"/>
<dbReference type="OMA" id="YKSPYDL"/>
<dbReference type="TreeFam" id="TF316276"/>
<dbReference type="Reactome" id="R-MMU-204005">
    <property type="pathway name" value="COPII-mediated vesicle transport"/>
</dbReference>
<dbReference type="BioGRID-ORCS" id="227648">
    <property type="hits" value="13 hits in 79 CRISPR screens"/>
</dbReference>
<dbReference type="ChiTaRS" id="Sec16a">
    <property type="organism name" value="mouse"/>
</dbReference>
<dbReference type="PRO" id="PR:E9QAT4"/>
<dbReference type="Proteomes" id="UP000000589">
    <property type="component" value="Chromosome 2"/>
</dbReference>
<dbReference type="Bgee" id="ENSMUSG00000026924">
    <property type="expression patterns" value="Expressed in animal zygote and 248 other cell types or tissues"/>
</dbReference>
<dbReference type="ExpressionAtlas" id="E9QAT4">
    <property type="expression patterns" value="baseline and differential"/>
</dbReference>
<dbReference type="GO" id="GO:0005829">
    <property type="term" value="C:cytosol"/>
    <property type="evidence" value="ECO:0000250"/>
    <property type="project" value="UniProtKB"/>
</dbReference>
<dbReference type="GO" id="GO:0070971">
    <property type="term" value="C:endoplasmic reticulum exit site"/>
    <property type="evidence" value="ECO:0000314"/>
    <property type="project" value="UniProtKB"/>
</dbReference>
<dbReference type="GO" id="GO:0005789">
    <property type="term" value="C:endoplasmic reticulum membrane"/>
    <property type="evidence" value="ECO:0007669"/>
    <property type="project" value="UniProtKB-SubCell"/>
</dbReference>
<dbReference type="GO" id="GO:0000139">
    <property type="term" value="C:Golgi membrane"/>
    <property type="evidence" value="ECO:0007669"/>
    <property type="project" value="UniProtKB-SubCell"/>
</dbReference>
<dbReference type="GO" id="GO:0031090">
    <property type="term" value="C:organelle membrane"/>
    <property type="evidence" value="ECO:0000250"/>
    <property type="project" value="UniProtKB"/>
</dbReference>
<dbReference type="GO" id="GO:0048471">
    <property type="term" value="C:perinuclear region of cytoplasm"/>
    <property type="evidence" value="ECO:0000314"/>
    <property type="project" value="UniProtKB"/>
</dbReference>
<dbReference type="GO" id="GO:0007029">
    <property type="term" value="P:endoplasmic reticulum organization"/>
    <property type="evidence" value="ECO:0000315"/>
    <property type="project" value="UniProtKB"/>
</dbReference>
<dbReference type="GO" id="GO:0006888">
    <property type="term" value="P:endoplasmic reticulum to Golgi vesicle-mediated transport"/>
    <property type="evidence" value="ECO:0007669"/>
    <property type="project" value="Ensembl"/>
</dbReference>
<dbReference type="GO" id="GO:0006893">
    <property type="term" value="P:Golgi to plasma membrane transport"/>
    <property type="evidence" value="ECO:0000250"/>
    <property type="project" value="UniProtKB"/>
</dbReference>
<dbReference type="GO" id="GO:0032527">
    <property type="term" value="P:protein exit from endoplasmic reticulum"/>
    <property type="evidence" value="ECO:0000315"/>
    <property type="project" value="UniProtKB"/>
</dbReference>
<dbReference type="GO" id="GO:0070973">
    <property type="term" value="P:protein localization to endoplasmic reticulum exit site"/>
    <property type="evidence" value="ECO:0000250"/>
    <property type="project" value="UniProtKB"/>
</dbReference>
<dbReference type="GO" id="GO:0072659">
    <property type="term" value="P:protein localization to plasma membrane"/>
    <property type="evidence" value="ECO:0000315"/>
    <property type="project" value="UniProtKB"/>
</dbReference>
<dbReference type="GO" id="GO:0050821">
    <property type="term" value="P:protein stabilization"/>
    <property type="evidence" value="ECO:0000250"/>
    <property type="project" value="UniProtKB"/>
</dbReference>
<dbReference type="GO" id="GO:0003400">
    <property type="term" value="P:regulation of COPII vesicle coating"/>
    <property type="evidence" value="ECO:0007669"/>
    <property type="project" value="Ensembl"/>
</dbReference>
<dbReference type="GO" id="GO:0034976">
    <property type="term" value="P:response to endoplasmic reticulum stress"/>
    <property type="evidence" value="ECO:0000250"/>
    <property type="project" value="UniProtKB"/>
</dbReference>
<dbReference type="CDD" id="cd09233">
    <property type="entry name" value="ACE1-Sec16-like"/>
    <property type="match status" value="1"/>
</dbReference>
<dbReference type="FunFam" id="1.25.40.1030:FF:000002">
    <property type="entry name" value="Protein transport protein sec16"/>
    <property type="match status" value="1"/>
</dbReference>
<dbReference type="Gene3D" id="1.25.40.1030">
    <property type="match status" value="1"/>
</dbReference>
<dbReference type="InterPro" id="IPR024340">
    <property type="entry name" value="Sec16_CCD"/>
</dbReference>
<dbReference type="InterPro" id="IPR024298">
    <property type="entry name" value="Sec16_Sec23-bd"/>
</dbReference>
<dbReference type="PANTHER" id="PTHR13402:SF13">
    <property type="entry name" value="PROTEIN TRANSPORT PROTEIN SEC16A"/>
    <property type="match status" value="1"/>
</dbReference>
<dbReference type="PANTHER" id="PTHR13402">
    <property type="entry name" value="RGPR-RELATED"/>
    <property type="match status" value="1"/>
</dbReference>
<dbReference type="Pfam" id="PF12932">
    <property type="entry name" value="Sec16"/>
    <property type="match status" value="1"/>
</dbReference>
<dbReference type="Pfam" id="PF12931">
    <property type="entry name" value="TPR_Sec16"/>
    <property type="match status" value="1"/>
</dbReference>
<feature type="chain" id="PRO_0000445696" description="Protein transport protein Sec16A">
    <location>
        <begin position="1"/>
        <end position="2357"/>
    </location>
</feature>
<feature type="region of interest" description="Disordered" evidence="2">
    <location>
        <begin position="1"/>
        <end position="225"/>
    </location>
</feature>
<feature type="region of interest" description="Disordered" evidence="2">
    <location>
        <begin position="240"/>
        <end position="347"/>
    </location>
</feature>
<feature type="region of interest" description="Disordered" evidence="2">
    <location>
        <begin position="394"/>
        <end position="463"/>
    </location>
</feature>
<feature type="region of interest" description="Disordered" evidence="2">
    <location>
        <begin position="504"/>
        <end position="562"/>
    </location>
</feature>
<feature type="region of interest" description="Disordered" evidence="2">
    <location>
        <begin position="579"/>
        <end position="630"/>
    </location>
</feature>
<feature type="region of interest" description="Disordered" evidence="2">
    <location>
        <begin position="666"/>
        <end position="689"/>
    </location>
</feature>
<feature type="region of interest" description="Disordered" evidence="2">
    <location>
        <begin position="714"/>
        <end position="739"/>
    </location>
</feature>
<feature type="region of interest" description="Disordered" evidence="2">
    <location>
        <begin position="778"/>
        <end position="820"/>
    </location>
</feature>
<feature type="region of interest" description="Disordered" evidence="2">
    <location>
        <begin position="917"/>
        <end position="1008"/>
    </location>
</feature>
<feature type="region of interest" description="Disordered" evidence="2">
    <location>
        <begin position="1023"/>
        <end position="1055"/>
    </location>
</feature>
<feature type="region of interest" description="Required for localization to endoplasmic reticulum exit sites" evidence="1">
    <location>
        <begin position="1037"/>
        <end position="1905"/>
    </location>
</feature>
<feature type="region of interest" description="Disordered" evidence="2">
    <location>
        <begin position="1076"/>
        <end position="1151"/>
    </location>
</feature>
<feature type="region of interest" description="Interaction with MIA3" evidence="1">
    <location>
        <begin position="1118"/>
        <end position="1415"/>
    </location>
</feature>
<feature type="region of interest" description="Required for endoplasmic reticulum localization" evidence="1">
    <location>
        <begin position="1119"/>
        <end position="1420"/>
    </location>
</feature>
<feature type="region of interest" description="Disordered" evidence="2">
    <location>
        <begin position="1226"/>
        <end position="1253"/>
    </location>
</feature>
<feature type="region of interest" description="Disordered" evidence="2">
    <location>
        <begin position="1344"/>
        <end position="1395"/>
    </location>
</feature>
<feature type="region of interest" description="Central conserved domain (CCD); mediates interaction with RNF183, LRRK2 and SEC13" evidence="1">
    <location>
        <begin position="1449"/>
        <end position="1905"/>
    </location>
</feature>
<feature type="region of interest" description="Disordered" evidence="2">
    <location>
        <begin position="1907"/>
        <end position="1943"/>
    </location>
</feature>
<feature type="region of interest" description="Disordered" evidence="2">
    <location>
        <begin position="1993"/>
        <end position="2141"/>
    </location>
</feature>
<feature type="region of interest" description="Required for interaction with SEC23A" evidence="1">
    <location>
        <begin position="2126"/>
        <end position="2357"/>
    </location>
</feature>
<feature type="region of interest" description="Disordered" evidence="2">
    <location>
        <begin position="2156"/>
        <end position="2198"/>
    </location>
</feature>
<feature type="region of interest" description="Disordered" evidence="2">
    <location>
        <begin position="2240"/>
        <end position="2357"/>
    </location>
</feature>
<feature type="compositionally biased region" description="Polar residues" evidence="2">
    <location>
        <begin position="57"/>
        <end position="75"/>
    </location>
</feature>
<feature type="compositionally biased region" description="Polar residues" evidence="2">
    <location>
        <begin position="94"/>
        <end position="104"/>
    </location>
</feature>
<feature type="compositionally biased region" description="Low complexity" evidence="2">
    <location>
        <begin position="208"/>
        <end position="221"/>
    </location>
</feature>
<feature type="compositionally biased region" description="Polar residues" evidence="2">
    <location>
        <begin position="281"/>
        <end position="290"/>
    </location>
</feature>
<feature type="compositionally biased region" description="Polar residues" evidence="2">
    <location>
        <begin position="333"/>
        <end position="342"/>
    </location>
</feature>
<feature type="compositionally biased region" description="Low complexity" evidence="2">
    <location>
        <begin position="540"/>
        <end position="561"/>
    </location>
</feature>
<feature type="compositionally biased region" description="Polar residues" evidence="2">
    <location>
        <begin position="581"/>
        <end position="590"/>
    </location>
</feature>
<feature type="compositionally biased region" description="Polar residues" evidence="2">
    <location>
        <begin position="921"/>
        <end position="959"/>
    </location>
</feature>
<feature type="compositionally biased region" description="Polar residues" evidence="2">
    <location>
        <begin position="972"/>
        <end position="997"/>
    </location>
</feature>
<feature type="compositionally biased region" description="Polar residues" evidence="2">
    <location>
        <begin position="1029"/>
        <end position="1041"/>
    </location>
</feature>
<feature type="compositionally biased region" description="Low complexity" evidence="2">
    <location>
        <begin position="1134"/>
        <end position="1150"/>
    </location>
</feature>
<feature type="compositionally biased region" description="Basic and acidic residues" evidence="2">
    <location>
        <begin position="1227"/>
        <end position="1238"/>
    </location>
</feature>
<feature type="compositionally biased region" description="Basic and acidic residues" evidence="2">
    <location>
        <begin position="1348"/>
        <end position="1369"/>
    </location>
</feature>
<feature type="compositionally biased region" description="Low complexity" evidence="2">
    <location>
        <begin position="1371"/>
        <end position="1392"/>
    </location>
</feature>
<feature type="compositionally biased region" description="Polar residues" evidence="2">
    <location>
        <begin position="1908"/>
        <end position="1927"/>
    </location>
</feature>
<feature type="compositionally biased region" description="Polar residues" evidence="2">
    <location>
        <begin position="2092"/>
        <end position="2105"/>
    </location>
</feature>
<feature type="compositionally biased region" description="Basic and acidic residues" evidence="2">
    <location>
        <begin position="2106"/>
        <end position="2126"/>
    </location>
</feature>
<feature type="compositionally biased region" description="Polar residues" evidence="2">
    <location>
        <begin position="2332"/>
        <end position="2343"/>
    </location>
</feature>
<feature type="modified residue" description="Phosphoserine" evidence="1">
    <location>
        <position position="311"/>
    </location>
</feature>
<feature type="modified residue" description="Phosphoserine" evidence="1">
    <location>
        <position position="581"/>
    </location>
</feature>
<feature type="modified residue" description="Phosphoserine" evidence="1">
    <location>
        <position position="591"/>
    </location>
</feature>
<feature type="modified residue" description="Phosphoserine" evidence="1">
    <location>
        <position position="609"/>
    </location>
</feature>
<feature type="modified residue" description="Phosphoserine" evidence="1">
    <location>
        <position position="611"/>
    </location>
</feature>
<feature type="modified residue" description="Phosphoserine" evidence="1">
    <location>
        <position position="614"/>
    </location>
</feature>
<feature type="modified residue" description="Phosphothreonine" evidence="1">
    <location>
        <position position="615"/>
    </location>
</feature>
<feature type="modified residue" description="Phosphoserine" evidence="1">
    <location>
        <position position="617"/>
    </location>
</feature>
<feature type="modified residue" description="Phosphoserine" evidence="1">
    <location>
        <position position="1087"/>
    </location>
</feature>
<feature type="modified residue" description="Phosphoserine" evidence="1">
    <location>
        <position position="1223"/>
    </location>
</feature>
<feature type="modified residue" description="Phosphoserine" evidence="1">
    <location>
        <position position="1245"/>
    </location>
</feature>
<feature type="modified residue" description="Phosphothreonine" evidence="1">
    <location>
        <position position="1340"/>
    </location>
</feature>
<feature type="modified residue" description="Phosphoserine" evidence="1">
    <location>
        <position position="1342"/>
    </location>
</feature>
<feature type="modified residue" description="Phosphoserine" evidence="1">
    <location>
        <position position="1362"/>
    </location>
</feature>
<feature type="modified residue" description="Phosphoserine" evidence="1">
    <location>
        <position position="1365"/>
    </location>
</feature>
<feature type="modified residue" description="Phosphoserine" evidence="1">
    <location>
        <position position="1371"/>
    </location>
</feature>
<feature type="modified residue" description="Phosphoserine" evidence="1">
    <location>
        <position position="1374"/>
    </location>
</feature>
<feature type="modified residue" description="Phosphoserine" evidence="1">
    <location>
        <position position="1377"/>
    </location>
</feature>
<feature type="modified residue" description="Phosphoserine" evidence="1">
    <location>
        <position position="1384"/>
    </location>
</feature>
<feature type="modified residue" description="Phosphoserine" evidence="1">
    <location>
        <position position="1588"/>
    </location>
</feature>
<feature type="modified residue" description="Phosphoserine" evidence="1">
    <location>
        <position position="1616"/>
    </location>
</feature>
<feature type="modified residue" description="Phosphothreonine" evidence="1">
    <location>
        <position position="1922"/>
    </location>
</feature>
<feature type="modified residue" description="Phosphoserine" evidence="1">
    <location>
        <position position="1951"/>
    </location>
</feature>
<feature type="modified residue" description="Phosphoserine" evidence="1">
    <location>
        <position position="2043"/>
    </location>
</feature>
<feature type="modified residue" description="Phosphoserine" evidence="1">
    <location>
        <position position="2063"/>
    </location>
</feature>
<feature type="modified residue" description="Phosphoserine" evidence="1">
    <location>
        <position position="2077"/>
    </location>
</feature>
<feature type="modified residue" description="Phosphoserine" evidence="1">
    <location>
        <position position="2094"/>
    </location>
</feature>
<feature type="modified residue" description="Phosphoserine" evidence="1">
    <location>
        <position position="2291"/>
    </location>
</feature>
<feature type="splice variant" id="VSP_059936" description="In isoform 2." evidence="6">
    <original>E</original>
    <variation>ELSRCSSLSSLSQEVSRHFHQ</variation>
    <location>
        <position position="2309"/>
    </location>
</feature>
<feature type="sequence conflict" description="In Ref. 2; AAH42603." evidence="8" ref="2">
    <original>P</original>
    <variation>L</variation>
    <location>
        <position position="2038"/>
    </location>
</feature>
<gene>
    <name type="primary">Sec16a</name>
    <name type="synonym">Kiaa0310</name>
    <name type="synonym">Sec16</name>
</gene>
<comment type="function">
    <text evidence="1 3 5">Acts as a molecular scaffold that plays a key role in the organization of the endoplasmic reticulum exit sites (ERES), also known as transitional endoplasmic reticulum (tER). SAR1A-GTP-dependent assembly of SEC16A on the ER membrane forms an organized scaffold defining an ERES. Required for secretory cargo traffic from the endoplasmic reticulum to the Golgi apparatus (PubMed:17428803). Mediates the recruitment of MIA3/TANGO to ERES. Regulates both conventional (ER/Golgi-dependent) and GORASP2-mediated unconventional (ER/Golgi-independent) trafficking of CFTR to cell membrane (By similarity). Acts as a RAB10 effector in the regulation of insulin-induced SLC2A4/GLUT4 glucose transporter-enriched vesicles delivery to the plasma membrane in adipocytes (PubMed:27354378).</text>
</comment>
<comment type="subunit">
    <text evidence="1 3 4 5">SEC16A and SEC16B are each present in multiple copies in a heteromeric complex (By similarity). Interacts with SEC23A (PubMed:17428803). Interacts with RNF183, RNF152, MIA3 and SEC13 (By similarity). Interacts with GORASP2 in response to ER stress (By similarity). Interacts with LRRK2 (via ROC domain) (PubMed:25201882). Interacts with RAB10 (PubMed:27354378).</text>
</comment>
<comment type="subcellular location">
    <subcellularLocation>
        <location evidence="1">Endoplasmic reticulum membrane</location>
        <topology>Peripheral membrane protein</topology>
    </subcellularLocation>
    <subcellularLocation>
        <location evidence="1">Golgi apparatus membrane</location>
        <topology evidence="1">Peripheral membrane protein</topology>
    </subcellularLocation>
    <subcellularLocation>
        <location evidence="5">Cytoplasm</location>
        <location evidence="5">Perinuclear region</location>
    </subcellularLocation>
    <subcellularLocation>
        <location evidence="1">Cytoplasm</location>
        <location evidence="1">Cytosol</location>
    </subcellularLocation>
    <subcellularLocation>
        <location evidence="1">Microsome membrane</location>
    </subcellularLocation>
    <text evidence="1 4">SAR1A activity is required to maintain SEC16A localization at discrete locations on the ER membrane perhaps by preventing its dissociation (By similarity). Localizes to endoplasmic reticulum exit sites (ERES), also known as transitional endoplasmic reticulum (tER). MIA3 and LRRK2 are required for its proper localization to ERES (PubMed:25201882). Recruited to microsomal membrane in SAR1-dependent manner (By similarity).</text>
</comment>
<comment type="alternative products">
    <event type="alternative splicing"/>
    <isoform>
        <id>E9QAT4-1</id>
        <name>1</name>
        <sequence type="displayed"/>
    </isoform>
    <isoform>
        <id>E9QAT4-2</id>
        <name>2</name>
        <sequence type="described" ref="VSP_059936"/>
    </isoform>
</comment>
<comment type="similarity">
    <text evidence="8">Belongs to the SEC16 family.</text>
</comment>
<proteinExistence type="evidence at protein level"/>
<protein>
    <recommendedName>
        <fullName>Protein transport protein Sec16A</fullName>
    </recommendedName>
    <alternativeName>
        <fullName>SEC16 homolog A</fullName>
        <shortName evidence="7">p250</shortName>
    </alternativeName>
</protein>
<sequence length="2357" mass="254202">MQPPPQAVPSGVAGPPPAGNPRSMFWANSPYRKPANNAPVAPITRPLQPVTDPFAFNRQTLQNTPVGSSSKSSLPNLPGPALSVFSQWPGLPVTPTNAGDSSTGLHEPLSGTLSQPRADASLFPPASTPSSLPGLEVSRNAEADPSSGHEVQMLPHSAHYIPGVGPEQPLGGQMNDSGSGPDQPMNRHAPHDGAVTHAASPFLPQPQMPGQWGPAQGGPQPSYQHHSPYLEGPVQNMGLQAASLPHFPPPSSLHQGPGHESHAPQTFTPASLASGEGNEIVHQQSKNHPLSSFPPKHTFEQNSRIGNMWASPELKQNPGVNKEHLLDPAHVNPFTQGNSPENQAHHPPVAATNHALQEAASGALSMFFQGEETENEENLSSEKAGLDKRLNLDSFSSTSRLGHPPPPGASGVYQAFPRGPSSEAAQEGDAQPYFSQSVGVRLDKQSTVPPANDAWGDVPGTGTRCASGPQCENVENLEFVQNQEVLPRETLSVDPFPLSDQIRYGPLPGPAASRPATVGLTRGGGLNLEAPDTPLHPTRPDSVSSSYSSHSHRSPPGSARPQELVGTFIQQEVGKLEDDTSGSFFKQIDSSPVGGETDEVTGSQNCCSSLSQPSTPSPPKPTGVFQTSANSSFEPVKSHLVGVKPVEADRANMVVEVRGTQYCPKKRRAAVAPPDATSGNLEQPPDNMETPCAPQACPLPLSTTGEAGQLVSNTAGTPLDTVRPVPDKRPSARAQGPVKCESPATTLWAQNELPDFGGNVLLAPAAPALYVPVKPKPSEVVHHPEKGMSGQKAWKQGSVPPLQNQDPPGASENLENPPKVGEEEALPVQASSGYASLLSSPPTESLHNQPVLIAQPDQSYNLAQPINFSVSLLNPNEKNQSWGDAVVGERSIVSNNWALGGDPEERAALSGVPASAVTGASLPSSIPQNCAPQGSGSSEMIASQSASWLVQQLSPQTPQSPHPNAEKGPSEFVSSPAGNTSVMLVPPASSTLVPNSNKAKHSSNQEEAVGALDFTLNRTLENPVRMYSPSPSDGPASQQPLPNHPRQSGPGLHNQDHFYQQVTKDAQDQHRLERAQPELVPPRPQNSPQVPQASCPEPSNPESPPTQGQSESLAQPPASPASVNTGQLLPQPPQASSASVTSTNSSQAAVRSEQLWLHPPPPNTFGPAPQDLASYYYYRPLYDAYQSQYPSPYPSDPGTASLYYQDMYGLYEPRYRPYDSSASAYAENHRYSEPERPSSRASHYSDQLAPRQGYPEGYYNSKSGWSSHSDYYANYYSGQYDYGDPSRWDRYYGSRLRDPRTWDRRYWYDSEHDPYRKDHYAYSDRPEKCDDHWRYDPRFTGSFDDDAEIHRDPYGEEADRRSIHSEHSARSLRSTHSLPSRRSSLSSHSHQSQIYRSHHVTGGSFEAPHAPGSFHGDYAYGTYASNFSGAHGFPEYSYPADTSWPAVEQVPSRPTSPEKFTVPHVCARFGPGGQLLKVIPNLPSEGQPALVEIHSLETLLQHTPEQEEMRSFPGPLGKDDTHKVDVINFAQNKATKCLQNESLIDKESASLLWKFIILLCRQNGTVVGTDIAELLLRDHRTVWLPGKSPNEANLIDFTNEAVEQVEEEESGEAQLSFLTDSQTVTTSVLEKETERFRELLLYGRKKDALESAMKNGLWGHALLLASKMDSRTHARVMTRFANSLPINDPLQTVYQLMSGRMPAASTCCGDEKWGDWRPHLAMVLSNLNNNMDVESRTMATMGDTLASKGLLDAAHFCYLMAQVGFGVYTKKTTKLVLIGSNHSLPFLKFATNEAIQRTEAYEYAQSLGAHTCSLPNFQVFKFIYLCRLAEMGLATQAFHYCEVIAKSVLTQPGAYSPVLISQLTQMASQLRLFDPQLKEKPEEESFVEPAWLVQLQHVERQIQEGTVLWSQDGTEPQQCRITSGSEVEQSDGPGLNQQAGPQADNPLLMPSTEPLMHGVQLLPTAPQTLPDGQPAHLSRVPMFPVPMSRGPLELSPAYGPPGSALGFPESSRSDPAVLHPGQALPPTTLSLQESGLPPQEAKSPDPEMVPRGSPVRHSPPELSQEEFGESFADPGSSRTAQDLETSPVWDLGSSSLTRAPSLTSDSEGKKPAQAVKKEPKEPKKTESWFSRWLPGKKRTEAYLPDDKNKSIVWDEKKNQWVNLNEPEEEKKAPPPPPTSFPRVPQVAPTGPAGPPTASVNVFSRKAGGSRARYVDVLNPSGTQRSEPALAPADFFAPLAPLPIPSNLFVPNPDAEEPQPADGTGCRGQAPAGTQSKAESTLEPKVGSSTVSAPGPELLPSKPDGSQGGEAPGDHCPTGAPHGGSVPFYNPAQLVQASVTSGNSRPGRIGQRKYAALN</sequence>
<organism>
    <name type="scientific">Mus musculus</name>
    <name type="common">Mouse</name>
    <dbReference type="NCBI Taxonomy" id="10090"/>
    <lineage>
        <taxon>Eukaryota</taxon>
        <taxon>Metazoa</taxon>
        <taxon>Chordata</taxon>
        <taxon>Craniata</taxon>
        <taxon>Vertebrata</taxon>
        <taxon>Euteleostomi</taxon>
        <taxon>Mammalia</taxon>
        <taxon>Eutheria</taxon>
        <taxon>Euarchontoglires</taxon>
        <taxon>Glires</taxon>
        <taxon>Rodentia</taxon>
        <taxon>Myomorpha</taxon>
        <taxon>Muroidea</taxon>
        <taxon>Muridae</taxon>
        <taxon>Murinae</taxon>
        <taxon>Mus</taxon>
        <taxon>Mus</taxon>
    </lineage>
</organism>
<accession>E9QAT4</accession>
<accession>A2AIX1</accession>
<accession>Q80U43</accession>
<accession>Q811L5</accession>
<keyword id="KW-0025">Alternative splicing</keyword>
<keyword id="KW-0963">Cytoplasm</keyword>
<keyword id="KW-0256">Endoplasmic reticulum</keyword>
<keyword id="KW-0931">ER-Golgi transport</keyword>
<keyword id="KW-0333">Golgi apparatus</keyword>
<keyword id="KW-0472">Membrane</keyword>
<keyword id="KW-0492">Microsome</keyword>
<keyword id="KW-0597">Phosphoprotein</keyword>
<keyword id="KW-0653">Protein transport</keyword>
<keyword id="KW-1185">Reference proteome</keyword>
<keyword id="KW-0813">Transport</keyword>
<evidence type="ECO:0000250" key="1">
    <source>
        <dbReference type="UniProtKB" id="O15027"/>
    </source>
</evidence>
<evidence type="ECO:0000256" key="2">
    <source>
        <dbReference type="SAM" id="MobiDB-lite"/>
    </source>
</evidence>
<evidence type="ECO:0000269" key="3">
    <source>
    </source>
</evidence>
<evidence type="ECO:0000269" key="4">
    <source>
    </source>
</evidence>
<evidence type="ECO:0000269" key="5">
    <source>
    </source>
</evidence>
<evidence type="ECO:0000303" key="6">
    <source>
    </source>
</evidence>
<evidence type="ECO:0000303" key="7">
    <source>
    </source>
</evidence>
<evidence type="ECO:0000305" key="8"/>
<reference key="1">
    <citation type="journal article" date="2009" name="PLoS Biol.">
        <title>Lineage-specific biology revealed by a finished genome assembly of the mouse.</title>
        <authorList>
            <person name="Church D.M."/>
            <person name="Goodstadt L."/>
            <person name="Hillier L.W."/>
            <person name="Zody M.C."/>
            <person name="Goldstein S."/>
            <person name="She X."/>
            <person name="Bult C.J."/>
            <person name="Agarwala R."/>
            <person name="Cherry J.L."/>
            <person name="DiCuccio M."/>
            <person name="Hlavina W."/>
            <person name="Kapustin Y."/>
            <person name="Meric P."/>
            <person name="Maglott D."/>
            <person name="Birtle Z."/>
            <person name="Marques A.C."/>
            <person name="Graves T."/>
            <person name="Zhou S."/>
            <person name="Teague B."/>
            <person name="Potamousis K."/>
            <person name="Churas C."/>
            <person name="Place M."/>
            <person name="Herschleb J."/>
            <person name="Runnheim R."/>
            <person name="Forrest D."/>
            <person name="Amos-Landgraf J."/>
            <person name="Schwartz D.C."/>
            <person name="Cheng Z."/>
            <person name="Lindblad-Toh K."/>
            <person name="Eichler E.E."/>
            <person name="Ponting C.P."/>
        </authorList>
    </citation>
    <scope>NUCLEOTIDE SEQUENCE [LARGE SCALE GENOMIC DNA]</scope>
    <source>
        <strain>C57BL/6J</strain>
    </source>
</reference>
<reference key="2">
    <citation type="journal article" date="2004" name="Genome Res.">
        <title>The status, quality, and expansion of the NIH full-length cDNA project: the Mammalian Gene Collection (MGC).</title>
        <authorList>
            <consortium name="The MGC Project Team"/>
        </authorList>
    </citation>
    <scope>NUCLEOTIDE SEQUENCE [LARGE SCALE MRNA] OF 1426-2357 (ISOFORM 2)</scope>
    <source>
        <strain>Czech II</strain>
        <tissue>Mammary tumor</tissue>
    </source>
</reference>
<reference key="3">
    <citation type="journal article" date="2003" name="DNA Res.">
        <title>Prediction of the coding sequences of mouse homologues of KIAA gene: II. The complete nucleotide sequences of 400 mouse KIAA-homologous cDNAs identified by screening of terminal sequences of cDNA clones randomly sampled from size-fractionated libraries.</title>
        <authorList>
            <person name="Okazaki N."/>
            <person name="Kikuno R."/>
            <person name="Ohara R."/>
            <person name="Inamoto S."/>
            <person name="Aizawa H."/>
            <person name="Yuasa S."/>
            <person name="Nakajima D."/>
            <person name="Nagase T."/>
            <person name="Ohara O."/>
            <person name="Koga H."/>
        </authorList>
    </citation>
    <scope>NUCLEOTIDE SEQUENCE [LARGE SCALE MRNA] OF 1452-2357 (ISOFORM 1)</scope>
    <source>
        <tissue>Brain</tissue>
    </source>
</reference>
<reference key="4">
    <citation type="journal article" date="2007" name="J. Biol. Chem.">
        <title>Mammalian Sec16/p250 plays a role in membrane traffic from the endoplasmic reticulum.</title>
        <authorList>
            <person name="Iinuma T."/>
            <person name="Shiga A."/>
            <person name="Nakamoto K."/>
            <person name="O'Brien M.B."/>
            <person name="Aridor M."/>
            <person name="Arimitsu N."/>
            <person name="Tagaya M."/>
            <person name="Tani K."/>
        </authorList>
    </citation>
    <scope>FUNCTION</scope>
    <scope>INTERACTION WITH SEC23A</scope>
</reference>
<reference key="5">
    <citation type="journal article" date="2007" name="Proc. Natl. Acad. Sci. U.S.A.">
        <title>Large-scale phosphorylation analysis of mouse liver.</title>
        <authorList>
            <person name="Villen J."/>
            <person name="Beausoleil S.A."/>
            <person name="Gerber S.A."/>
            <person name="Gygi S.P."/>
        </authorList>
    </citation>
    <scope>IDENTIFICATION BY MASS SPECTROMETRY [LARGE SCALE ANALYSIS]</scope>
</reference>
<reference key="6">
    <citation type="journal article" date="2009" name="Immunity">
        <title>The phagosomal proteome in interferon-gamma-activated macrophages.</title>
        <authorList>
            <person name="Trost M."/>
            <person name="English L."/>
            <person name="Lemieux S."/>
            <person name="Courcelles M."/>
            <person name="Desjardins M."/>
            <person name="Thibault P."/>
        </authorList>
    </citation>
    <scope>IDENTIFICATION BY MASS SPECTROMETRY [LARGE SCALE ANALYSIS]</scope>
</reference>
<reference key="7">
    <citation type="journal article" date="2010" name="Cell">
        <title>A tissue-specific atlas of mouse protein phosphorylation and expression.</title>
        <authorList>
            <person name="Huttlin E.L."/>
            <person name="Jedrychowski M.P."/>
            <person name="Elias J.E."/>
            <person name="Goswami T."/>
            <person name="Rad R."/>
            <person name="Beausoleil S.A."/>
            <person name="Villen J."/>
            <person name="Haas W."/>
            <person name="Sowa M.E."/>
            <person name="Gygi S.P."/>
        </authorList>
    </citation>
    <scope>IDENTIFICATION BY MASS SPECTROMETRY [LARGE SCALE ANALYSIS]</scope>
</reference>
<reference key="8">
    <citation type="journal article" date="2014" name="EMBO J.">
        <title>Leucine-rich repeat kinase 2 regulates Sec16A at ER exit sites to allow ER-Golgi export.</title>
        <authorList>
            <person name="Cho H.J."/>
            <person name="Yu J."/>
            <person name="Xie C."/>
            <person name="Rudrabhatla P."/>
            <person name="Chen X."/>
            <person name="Wu J."/>
            <person name="Parisiadou L."/>
            <person name="Liu G."/>
            <person name="Sun L."/>
            <person name="Ma B."/>
            <person name="Ding J."/>
            <person name="Liu Z."/>
            <person name="Cai H."/>
        </authorList>
    </citation>
    <scope>INTERACTION WITH LRRK2</scope>
    <scope>SUBCELLULAR LOCATION</scope>
</reference>
<reference key="9">
    <citation type="journal article" date="2016" name="J. Cell Biol.">
        <title>SEC16A is a RAB10 effector required for insulin-stimulated GLUT4 trafficking in adipocytes.</title>
        <authorList>
            <person name="Bruno J."/>
            <person name="Brumfield A."/>
            <person name="Chaudhary N."/>
            <person name="Iaea D."/>
            <person name="McGraw T.E."/>
        </authorList>
    </citation>
    <scope>FUNCTION</scope>
    <scope>SUBCELLULAR LOCATION</scope>
    <scope>INTERACTION WITH RAB10</scope>
</reference>
<name>SC16A_MOUSE</name>